<name>DF243_ARATH</name>
<proteinExistence type="inferred from homology"/>
<feature type="signal peptide" evidence="2">
    <location>
        <begin position="1"/>
        <end position="19"/>
    </location>
</feature>
<feature type="chain" id="PRO_0000031935" description="Putative defensin-like protein 243">
    <location>
        <begin position="20"/>
        <end position="90"/>
    </location>
</feature>
<feature type="disulfide bond" evidence="1">
    <location>
        <begin position="33"/>
        <end position="88"/>
    </location>
</feature>
<feature type="disulfide bond" evidence="1">
    <location>
        <begin position="43"/>
        <end position="72"/>
    </location>
</feature>
<feature type="disulfide bond" evidence="1">
    <location>
        <begin position="53"/>
        <end position="82"/>
    </location>
</feature>
<feature type="disulfide bond" evidence="1">
    <location>
        <begin position="70"/>
        <end position="84"/>
    </location>
</feature>
<evidence type="ECO:0000250" key="1"/>
<evidence type="ECO:0000255" key="2"/>
<evidence type="ECO:0000305" key="3"/>
<organism evidence="3">
    <name type="scientific">Arabidopsis thaliana</name>
    <name type="common">Mouse-ear cress</name>
    <dbReference type="NCBI Taxonomy" id="3702"/>
    <lineage>
        <taxon>Eukaryota</taxon>
        <taxon>Viridiplantae</taxon>
        <taxon>Streptophyta</taxon>
        <taxon>Embryophyta</taxon>
        <taxon>Tracheophyta</taxon>
        <taxon>Spermatophyta</taxon>
        <taxon>Magnoliopsida</taxon>
        <taxon>eudicotyledons</taxon>
        <taxon>Gunneridae</taxon>
        <taxon>Pentapetalae</taxon>
        <taxon>rosids</taxon>
        <taxon>malvids</taxon>
        <taxon>Brassicales</taxon>
        <taxon>Brassicaceae</taxon>
        <taxon>Camelineae</taxon>
        <taxon>Arabidopsis</taxon>
    </lineage>
</organism>
<keyword id="KW-0929">Antimicrobial</keyword>
<keyword id="KW-1015">Disulfide bond</keyword>
<keyword id="KW-0295">Fungicide</keyword>
<keyword id="KW-0611">Plant defense</keyword>
<keyword id="KW-1185">Reference proteome</keyword>
<keyword id="KW-0964">Secreted</keyword>
<keyword id="KW-0732">Signal</keyword>
<accession>P82628</accession>
<gene>
    <name type="primary">SCRL9</name>
    <name type="ordered locus">At2g05117</name>
    <name type="ORF">F5G3</name>
</gene>
<sequence>MKVEVIFLASCVLFSLIHAHLSHEEPMKEPEYCRWTNAFNGTCSDRGNPQTMCFFDFLDAHTARVMPKNCACNDLPGNKRYCECSFVCNS</sequence>
<comment type="subcellular location">
    <subcellularLocation>
        <location evidence="1">Secreted</location>
    </subcellularLocation>
</comment>
<comment type="similarity">
    <text evidence="3">Belongs to the DEFL family.</text>
</comment>
<protein>
    <recommendedName>
        <fullName>Putative defensin-like protein 243</fullName>
    </recommendedName>
    <alternativeName>
        <fullName>Putative S locus cysteine-rich-like protein 9</fullName>
        <shortName>Protein SCRL9</shortName>
        <shortName>SCR-like protein 9</shortName>
    </alternativeName>
</protein>
<reference evidence="3" key="1">
    <citation type="journal article" date="1999" name="Nature">
        <title>Sequence and analysis of chromosome 2 of the plant Arabidopsis thaliana.</title>
        <authorList>
            <person name="Lin X."/>
            <person name="Kaul S."/>
            <person name="Rounsley S.D."/>
            <person name="Shea T.P."/>
            <person name="Benito M.-I."/>
            <person name="Town C.D."/>
            <person name="Fujii C.Y."/>
            <person name="Mason T.M."/>
            <person name="Bowman C.L."/>
            <person name="Barnstead M.E."/>
            <person name="Feldblyum T.V."/>
            <person name="Buell C.R."/>
            <person name="Ketchum K.A."/>
            <person name="Lee J.J."/>
            <person name="Ronning C.M."/>
            <person name="Koo H.L."/>
            <person name="Moffat K.S."/>
            <person name="Cronin L.A."/>
            <person name="Shen M."/>
            <person name="Pai G."/>
            <person name="Van Aken S."/>
            <person name="Umayam L."/>
            <person name="Tallon L.J."/>
            <person name="Gill J.E."/>
            <person name="Adams M.D."/>
            <person name="Carrera A.J."/>
            <person name="Creasy T.H."/>
            <person name="Goodman H.M."/>
            <person name="Somerville C.R."/>
            <person name="Copenhaver G.P."/>
            <person name="Preuss D."/>
            <person name="Nierman W.C."/>
            <person name="White O."/>
            <person name="Eisen J.A."/>
            <person name="Salzberg S.L."/>
            <person name="Fraser C.M."/>
            <person name="Venter J.C."/>
        </authorList>
    </citation>
    <scope>NUCLEOTIDE SEQUENCE [LARGE SCALE GENOMIC DNA]</scope>
    <source>
        <strain>cv. Columbia</strain>
    </source>
</reference>
<reference key="2">
    <citation type="journal article" date="2017" name="Plant J.">
        <title>Araport11: a complete reannotation of the Arabidopsis thaliana reference genome.</title>
        <authorList>
            <person name="Cheng C.Y."/>
            <person name="Krishnakumar V."/>
            <person name="Chan A.P."/>
            <person name="Thibaud-Nissen F."/>
            <person name="Schobel S."/>
            <person name="Town C.D."/>
        </authorList>
    </citation>
    <scope>GENOME REANNOTATION</scope>
    <source>
        <strain>cv. Columbia</strain>
    </source>
</reference>
<reference evidence="3" key="3">
    <citation type="journal article" date="2001" name="Plant Mol. Biol.">
        <title>Two large Arabidopsis thaliana gene families are homologous to the Brassica gene superfamily that encodes pollen coat proteins and the male component of the self-incompatibility response.</title>
        <authorList>
            <person name="Vanoosthuyse V."/>
            <person name="Miege C."/>
            <person name="Dumas C."/>
            <person name="Cock J.M."/>
        </authorList>
    </citation>
    <scope>IDENTIFICATION</scope>
</reference>
<reference key="4">
    <citation type="journal article" date="2005" name="Plant Physiol.">
        <title>Genome organization of more than 300 defensin-like genes in Arabidopsis.</title>
        <authorList>
            <person name="Silverstein K.A.T."/>
            <person name="Graham M.A."/>
            <person name="Paape T.D."/>
            <person name="VandenBosch K.A."/>
        </authorList>
    </citation>
    <scope>GENE FAMILY</scope>
</reference>
<dbReference type="EMBL" id="AC007018">
    <property type="status" value="NOT_ANNOTATED_CDS"/>
    <property type="molecule type" value="Genomic_DNA"/>
</dbReference>
<dbReference type="EMBL" id="CP002685">
    <property type="protein sequence ID" value="AEC05895.1"/>
    <property type="molecule type" value="Genomic_DNA"/>
</dbReference>
<dbReference type="RefSeq" id="NP_001031324.1">
    <property type="nucleotide sequence ID" value="NM_001036247.1"/>
</dbReference>
<dbReference type="iPTMnet" id="P82628"/>
<dbReference type="PaxDb" id="3702-AT2G05117.1"/>
<dbReference type="ProteomicsDB" id="224153"/>
<dbReference type="EnsemblPlants" id="AT2G05117.1">
    <property type="protein sequence ID" value="AT2G05117.1"/>
    <property type="gene ID" value="AT2G05117"/>
</dbReference>
<dbReference type="GeneID" id="3768317"/>
<dbReference type="Gramene" id="AT2G05117.1">
    <property type="protein sequence ID" value="AT2G05117.1"/>
    <property type="gene ID" value="AT2G05117"/>
</dbReference>
<dbReference type="KEGG" id="ath:AT2G05117"/>
<dbReference type="Araport" id="AT2G05117"/>
<dbReference type="TAIR" id="AT2G05117">
    <property type="gene designation" value="SCRL9"/>
</dbReference>
<dbReference type="HOGENOM" id="CLU_174283_0_0_1"/>
<dbReference type="InParanoid" id="P82628"/>
<dbReference type="PhylomeDB" id="P82628"/>
<dbReference type="PRO" id="PR:P82628"/>
<dbReference type="Proteomes" id="UP000006548">
    <property type="component" value="Chromosome 2"/>
</dbReference>
<dbReference type="ExpressionAtlas" id="P82628">
    <property type="expression patterns" value="baseline and differential"/>
</dbReference>
<dbReference type="GO" id="GO:0005576">
    <property type="term" value="C:extracellular region"/>
    <property type="evidence" value="ECO:0007669"/>
    <property type="project" value="UniProtKB-SubCell"/>
</dbReference>
<dbReference type="GO" id="GO:0050832">
    <property type="term" value="P:defense response to fungus"/>
    <property type="evidence" value="ECO:0007669"/>
    <property type="project" value="UniProtKB-KW"/>
</dbReference>
<dbReference type="GO" id="GO:0031640">
    <property type="term" value="P:killing of cells of another organism"/>
    <property type="evidence" value="ECO:0007669"/>
    <property type="project" value="UniProtKB-KW"/>
</dbReference>
<dbReference type="GO" id="GO:0007165">
    <property type="term" value="P:signal transduction"/>
    <property type="evidence" value="ECO:0007669"/>
    <property type="project" value="InterPro"/>
</dbReference>
<dbReference type="InterPro" id="IPR010682">
    <property type="entry name" value="SCRL"/>
</dbReference>
<dbReference type="PANTHER" id="PTHR34450:SF9">
    <property type="entry name" value="DEFENSIN-LIKE PROTEIN 242-RELATED"/>
    <property type="match status" value="1"/>
</dbReference>
<dbReference type="PANTHER" id="PTHR34450">
    <property type="entry name" value="DEFENSIN-LIKE PROTEIN 245-RELATED"/>
    <property type="match status" value="1"/>
</dbReference>
<dbReference type="Pfam" id="PF06876">
    <property type="entry name" value="SCRL"/>
    <property type="match status" value="1"/>
</dbReference>